<dbReference type="EMBL" id="M97681">
    <property type="status" value="NOT_ANNOTATED_CDS"/>
    <property type="molecule type" value="Unassigned_RNA"/>
</dbReference>
<dbReference type="PIR" id="B44277">
    <property type="entry name" value="B44277"/>
</dbReference>
<dbReference type="SMR" id="P35932"/>
<dbReference type="InterPro" id="IPR002630">
    <property type="entry name" value="Orbi_NS1"/>
</dbReference>
<dbReference type="Pfam" id="PF01718">
    <property type="entry name" value="Orbi_NS1"/>
    <property type="match status" value="1"/>
</dbReference>
<reference key="1">
    <citation type="journal article" date="1993" name="Virology">
        <title>High-sequence conservation among the United States bluetongue viruses cognate M2 genes which encode the nonstructural NS1 tubule protein.</title>
        <authorList>
            <person name="Hwang G.-Y."/>
            <person name="Chiou J.-F."/>
            <person name="Yang Y.-Y."/>
            <person name="Li J.K.-K."/>
        </authorList>
    </citation>
    <scope>NUCLEOTIDE SEQUENCE</scope>
</reference>
<gene>
    <name type="primary">Segment-5</name>
    <name type="synonym">M2</name>
</gene>
<protein>
    <recommendedName>
        <fullName>Non-structural protein NS1</fullName>
    </recommendedName>
</protein>
<proteinExistence type="inferred from homology"/>
<sequence length="552" mass="64580">MERFLRKYNISGDYANATRTFLAISPQWTCSHLKRNCLFNGMCVKQHFERAMIAATDAEEPAKAYKLVELAKEAMYDRETVWLQCFKSFSQPYEEDVEGKMKRCGAQLLEDYRKSGMMNEAVKQSALVNSERIRLDDSLSAMPYIYVPINDGQIVNPTFISRYRQIAYYFYNPDAADDWIDPNLFGIRGQHNQIKREVERQINTCPYTGYRGRVFQVMFLPIQLINFLRMDDFAKRFNRYASMAIQQYLRVGYAEEIRYVQQLFGRVPTGEFPLHQMMLMRRDLPTRDRSIVEARVRRSGDENWQSWLLPMIIIREGLDHQDRWEWFIDYMDRKHTCQLCYLKHSKQIPACSVIDVRASELTGCSPFKMVKIEEHVGNDSVFKTKLVRDEQIGRIGDHYYTTNCYTGAEALITTAIHIHRWIRGSGIWNDEGWQEGIFMLGRVLLRWELTKAQRSALLRLFCFVCYGYAPRADGTIPDWNNLGNFLDIILKGPELSEDEDERAYATMFEMVRCIITLCYAEKVHYAGFAAPACEGGEVINLAARMSQMWMEY</sequence>
<organismHost>
    <name type="scientific">Antilocapra americana</name>
    <name type="common">Pronghorn</name>
    <dbReference type="NCBI Taxonomy" id="9891"/>
</organismHost>
<organismHost>
    <name type="scientific">Bos taurus</name>
    <name type="common">Bovine</name>
    <dbReference type="NCBI Taxonomy" id="9913"/>
</organismHost>
<organismHost>
    <name type="scientific">Capra hircus</name>
    <name type="common">Goat</name>
    <dbReference type="NCBI Taxonomy" id="9925"/>
</organismHost>
<organismHost>
    <name type="scientific">Culicoides variipennis</name>
    <name type="common">Biting midge</name>
    <dbReference type="NCBI Taxonomy" id="46212"/>
</organismHost>
<organismHost>
    <name type="scientific">Ovis aries</name>
    <name type="common">Sheep</name>
    <dbReference type="NCBI Taxonomy" id="9940"/>
</organismHost>
<name>VNS1_BTV11</name>
<feature type="chain" id="PRO_0000222666" description="Non-structural protein NS1">
    <location>
        <begin position="1"/>
        <end position="552"/>
    </location>
</feature>
<evidence type="ECO:0000305" key="1"/>
<organism>
    <name type="scientific">Bluetongue virus 11 (isolate USA)</name>
    <name type="common">BTV 11</name>
    <dbReference type="NCBI Taxonomy" id="33716"/>
    <lineage>
        <taxon>Viruses</taxon>
        <taxon>Riboviria</taxon>
        <taxon>Orthornavirae</taxon>
        <taxon>Duplornaviricota</taxon>
        <taxon>Resentoviricetes</taxon>
        <taxon>Reovirales</taxon>
        <taxon>Sedoreoviridae</taxon>
        <taxon>Orbivirus</taxon>
        <taxon>Bluetongue virus</taxon>
    </lineage>
</organism>
<comment type="similarity">
    <text evidence="1">Belongs to the orbivirus non-structural protein NS1 family.</text>
</comment>
<accession>P35932</accession>